<name>RLMKL_ECOLI</name>
<keyword id="KW-0002">3D-structure</keyword>
<keyword id="KW-0963">Cytoplasm</keyword>
<keyword id="KW-0489">Methyltransferase</keyword>
<keyword id="KW-1185">Reference proteome</keyword>
<keyword id="KW-0694">RNA-binding</keyword>
<keyword id="KW-0698">rRNA processing</keyword>
<keyword id="KW-0949">S-adenosyl-L-methionine</keyword>
<keyword id="KW-0808">Transferase</keyword>
<accession>P75864</accession>
<organism>
    <name type="scientific">Escherichia coli (strain K12)</name>
    <dbReference type="NCBI Taxonomy" id="83333"/>
    <lineage>
        <taxon>Bacteria</taxon>
        <taxon>Pseudomonadati</taxon>
        <taxon>Pseudomonadota</taxon>
        <taxon>Gammaproteobacteria</taxon>
        <taxon>Enterobacterales</taxon>
        <taxon>Enterobacteriaceae</taxon>
        <taxon>Escherichia</taxon>
    </lineage>
</organism>
<evidence type="ECO:0000269" key="1">
    <source>
    </source>
</evidence>
<evidence type="ECO:0000269" key="2">
    <source>
    </source>
</evidence>
<evidence type="ECO:0000269" key="3">
    <source>
    </source>
</evidence>
<evidence type="ECO:0000305" key="4"/>
<evidence type="ECO:0007829" key="5">
    <source>
        <dbReference type="PDB" id="3V97"/>
    </source>
</evidence>
<comment type="function">
    <text evidence="1 2 3">Specifically methylates the guanine in position 2445 (m2G2445) and the guanine in position 2069 (m7G2069) of 23S rRNA. Methylation occurs before assembly of 23S rRNA into 50S subunits.</text>
</comment>
<comment type="catalytic activity">
    <reaction>
        <text>guanosine(2445) in 23S rRNA + S-adenosyl-L-methionine = N(2)-methylguanosine(2445) in 23S rRNA + S-adenosyl-L-homocysteine + H(+)</text>
        <dbReference type="Rhea" id="RHEA:42740"/>
        <dbReference type="Rhea" id="RHEA-COMP:10215"/>
        <dbReference type="Rhea" id="RHEA-COMP:10216"/>
        <dbReference type="ChEBI" id="CHEBI:15378"/>
        <dbReference type="ChEBI" id="CHEBI:57856"/>
        <dbReference type="ChEBI" id="CHEBI:59789"/>
        <dbReference type="ChEBI" id="CHEBI:74269"/>
        <dbReference type="ChEBI" id="CHEBI:74481"/>
        <dbReference type="EC" id="2.1.1.173"/>
    </reaction>
</comment>
<comment type="catalytic activity">
    <reaction>
        <text>guanosine(2069) in 23S rRNA + S-adenosyl-L-methionine = N(2)-methylguanosine(2069) in 23S rRNA + S-adenosyl-L-homocysteine + H(+)</text>
        <dbReference type="Rhea" id="RHEA:43772"/>
        <dbReference type="Rhea" id="RHEA-COMP:10688"/>
        <dbReference type="Rhea" id="RHEA-COMP:10689"/>
        <dbReference type="ChEBI" id="CHEBI:15378"/>
        <dbReference type="ChEBI" id="CHEBI:57856"/>
        <dbReference type="ChEBI" id="CHEBI:59789"/>
        <dbReference type="ChEBI" id="CHEBI:74269"/>
        <dbReference type="ChEBI" id="CHEBI:74481"/>
        <dbReference type="EC" id="2.1.1.264"/>
    </reaction>
</comment>
<comment type="activity regulation">
    <text evidence="2">The N-terminal RlmL activity is enhanced by the C-terminal RlmK activity.</text>
</comment>
<comment type="subunit">
    <text evidence="3">Monomer.</text>
</comment>
<comment type="interaction">
    <interactant intactId="EBI-547718">
        <id>P75864</id>
    </interactant>
    <interactant intactId="EBI-562154">
        <id>P0DTT0</id>
        <label>bipA</label>
    </interactant>
    <organismsDiffer>false</organismsDiffer>
    <experiments>3</experiments>
</comment>
<comment type="interaction">
    <interactant intactId="EBI-547718">
        <id>P75864</id>
    </interactant>
    <interactant intactId="EBI-561550">
        <id>P37765</id>
        <label>rluB</label>
    </interactant>
    <organismsDiffer>false</organismsDiffer>
    <experiments>3</experiments>
</comment>
<comment type="subcellular location">
    <subcellularLocation>
        <location evidence="4">Cytoplasm</location>
    </subcellularLocation>
</comment>
<comment type="domain">
    <text evidence="2 3">Consists of a N-terminal RlmL domain and a C-terminal RlmK domain, linked by a highly flexible loop.</text>
</comment>
<comment type="similarity">
    <text evidence="4">Belongs to the methyltransferase superfamily. RlmKL family.</text>
</comment>
<reference key="1">
    <citation type="journal article" date="1996" name="DNA Res.">
        <title>A 718-kb DNA sequence of the Escherichia coli K-12 genome corresponding to the 12.7-28.0 min region on the linkage map.</title>
        <authorList>
            <person name="Oshima T."/>
            <person name="Aiba H."/>
            <person name="Baba T."/>
            <person name="Fujita K."/>
            <person name="Hayashi K."/>
            <person name="Honjo A."/>
            <person name="Ikemoto K."/>
            <person name="Inada T."/>
            <person name="Itoh T."/>
            <person name="Kajihara M."/>
            <person name="Kanai K."/>
            <person name="Kashimoto K."/>
            <person name="Kimura S."/>
            <person name="Kitagawa M."/>
            <person name="Makino K."/>
            <person name="Masuda S."/>
            <person name="Miki T."/>
            <person name="Mizobuchi K."/>
            <person name="Mori H."/>
            <person name="Motomura K."/>
            <person name="Nakamura Y."/>
            <person name="Nashimoto H."/>
            <person name="Nishio Y."/>
            <person name="Saito N."/>
            <person name="Sampei G."/>
            <person name="Seki Y."/>
            <person name="Tagami H."/>
            <person name="Takemoto K."/>
            <person name="Wada C."/>
            <person name="Yamamoto Y."/>
            <person name="Yano M."/>
            <person name="Horiuchi T."/>
        </authorList>
    </citation>
    <scope>NUCLEOTIDE SEQUENCE [LARGE SCALE GENOMIC DNA]</scope>
    <source>
        <strain>K12 / W3110 / ATCC 27325 / DSM 5911</strain>
    </source>
</reference>
<reference key="2">
    <citation type="journal article" date="1997" name="Science">
        <title>The complete genome sequence of Escherichia coli K-12.</title>
        <authorList>
            <person name="Blattner F.R."/>
            <person name="Plunkett G. III"/>
            <person name="Bloch C.A."/>
            <person name="Perna N.T."/>
            <person name="Burland V."/>
            <person name="Riley M."/>
            <person name="Collado-Vides J."/>
            <person name="Glasner J.D."/>
            <person name="Rode C.K."/>
            <person name="Mayhew G.F."/>
            <person name="Gregor J."/>
            <person name="Davis N.W."/>
            <person name="Kirkpatrick H.A."/>
            <person name="Goeden M.A."/>
            <person name="Rose D.J."/>
            <person name="Mau B."/>
            <person name="Shao Y."/>
        </authorList>
    </citation>
    <scope>NUCLEOTIDE SEQUENCE [LARGE SCALE GENOMIC DNA]</scope>
    <source>
        <strain>K12 / MG1655 / ATCC 47076</strain>
    </source>
</reference>
<reference key="3">
    <citation type="journal article" date="2006" name="Mol. Syst. Biol.">
        <title>Highly accurate genome sequences of Escherichia coli K-12 strains MG1655 and W3110.</title>
        <authorList>
            <person name="Hayashi K."/>
            <person name="Morooka N."/>
            <person name="Yamamoto Y."/>
            <person name="Fujita K."/>
            <person name="Isono K."/>
            <person name="Choi S."/>
            <person name="Ohtsubo E."/>
            <person name="Baba T."/>
            <person name="Wanner B.L."/>
            <person name="Mori H."/>
            <person name="Horiuchi T."/>
        </authorList>
    </citation>
    <scope>NUCLEOTIDE SEQUENCE [LARGE SCALE GENOMIC DNA]</scope>
    <source>
        <strain>K12 / W3110 / ATCC 27325 / DSM 5911</strain>
    </source>
</reference>
<reference key="4">
    <citation type="journal article" date="2006" name="J. Mol. Biol.">
        <title>Identification of Escherichia coli m2G methyltransferases: I. the ycbY gene encodes a methyltransferase specific for G2445 of the 23 S rRNA.</title>
        <authorList>
            <person name="Lesnyak D.V."/>
            <person name="Sergiev P.V."/>
            <person name="Bogdanov A.A."/>
            <person name="Dontsova O.A."/>
        </authorList>
    </citation>
    <scope>FUNCTION</scope>
    <scope>CATALYTIC ACTIVITY</scope>
</reference>
<reference key="5">
    <citation type="journal article" date="2010" name="Acta Crystallogr. F">
        <title>Purification, crystallization and preliminary X-ray crystallographic analysis of 23S RNA m(2)G2445 methyltransferase RlmL from Escherichia coli.</title>
        <authorList>
            <person name="Wang K.T."/>
            <person name="Ma L."/>
            <person name="Nan J."/>
            <person name="Su X.D."/>
            <person name="Li L."/>
        </authorList>
    </citation>
    <scope>CRYSTALLIZATION</scope>
</reference>
<reference key="6">
    <citation type="journal article" date="2012" name="Nucleic Acids Res.">
        <title>Base methylations in the double-stranded RNA by a fused methyltransferase bearing unwinding activity.</title>
        <authorList>
            <person name="Kimura S."/>
            <person name="Ikeuchi Y."/>
            <person name="Kitahara K."/>
            <person name="Sakaguchi Y."/>
            <person name="Suzuki T."/>
            <person name="Suzuki T."/>
        </authorList>
    </citation>
    <scope>FUNCTION</scope>
    <scope>CATALYTIC ACTIVITY</scope>
    <scope>ACTIVITY REGULATION</scope>
    <scope>DOMAIN</scope>
    <scope>MUTAGENESIS OF ASP-195; ASN-309; ASN-397; ARG-530; ASP-568 AND ASP-597</scope>
</reference>
<reference key="7">
    <citation type="journal article" date="2012" name="Nucleic Acids Res.">
        <title>Structure of the bifunctional methyltransferase YcbY (RlmKL) that adds the m7G2069 and m2G2445 modifications in Escherichia coli 23S rRNA.</title>
        <authorList>
            <person name="Wang K.T."/>
            <person name="Desmolaize B."/>
            <person name="Nan J."/>
            <person name="Zhang X.W."/>
            <person name="Li L.F."/>
            <person name="Douthwaite S."/>
            <person name="Su X.D."/>
        </authorList>
    </citation>
    <scope>X-RAY CRYSTALLOGRAPHY (2.20 ANGSTROMS)</scope>
    <scope>FUNCTION</scope>
    <scope>CATALYTIC ACTIVITY</scope>
    <scope>SUBUNIT</scope>
    <scope>DOMAIN</scope>
</reference>
<dbReference type="EC" id="2.1.1.173"/>
<dbReference type="EC" id="2.1.1.264"/>
<dbReference type="EMBL" id="U00096">
    <property type="protein sequence ID" value="AAC74034.1"/>
    <property type="molecule type" value="Genomic_DNA"/>
</dbReference>
<dbReference type="EMBL" id="AP009048">
    <property type="protein sequence ID" value="BAA35703.1"/>
    <property type="molecule type" value="Genomic_DNA"/>
</dbReference>
<dbReference type="PIR" id="C64835">
    <property type="entry name" value="C64835"/>
</dbReference>
<dbReference type="RefSeq" id="NP_415468.1">
    <property type="nucleotide sequence ID" value="NC_000913.3"/>
</dbReference>
<dbReference type="RefSeq" id="WP_001086539.1">
    <property type="nucleotide sequence ID" value="NZ_SSZK01000002.1"/>
</dbReference>
<dbReference type="PDB" id="3V8V">
    <property type="method" value="X-ray"/>
    <property type="resolution" value="2.60 A"/>
    <property type="chains" value="A/B=1-702"/>
</dbReference>
<dbReference type="PDB" id="3V97">
    <property type="method" value="X-ray"/>
    <property type="resolution" value="2.20 A"/>
    <property type="chains" value="A/B=1-702"/>
</dbReference>
<dbReference type="PDBsum" id="3V8V"/>
<dbReference type="PDBsum" id="3V97"/>
<dbReference type="SMR" id="P75864"/>
<dbReference type="BioGRID" id="4260025">
    <property type="interactions" value="169"/>
</dbReference>
<dbReference type="BioGRID" id="849938">
    <property type="interactions" value="4"/>
</dbReference>
<dbReference type="DIP" id="DIP-11486N"/>
<dbReference type="FunCoup" id="P75864">
    <property type="interactions" value="422"/>
</dbReference>
<dbReference type="IntAct" id="P75864">
    <property type="interactions" value="48"/>
</dbReference>
<dbReference type="STRING" id="511145.b0948"/>
<dbReference type="jPOST" id="P75864"/>
<dbReference type="PaxDb" id="511145-b0948"/>
<dbReference type="EnsemblBacteria" id="AAC74034">
    <property type="protein sequence ID" value="AAC74034"/>
    <property type="gene ID" value="b0948"/>
</dbReference>
<dbReference type="GeneID" id="945564"/>
<dbReference type="KEGG" id="ecj:JW0931"/>
<dbReference type="KEGG" id="eco:b0948"/>
<dbReference type="KEGG" id="ecoc:C3026_05805"/>
<dbReference type="PATRIC" id="fig|1411691.4.peg.1326"/>
<dbReference type="EchoBASE" id="EB3481"/>
<dbReference type="eggNOG" id="COG0116">
    <property type="taxonomic scope" value="Bacteria"/>
</dbReference>
<dbReference type="eggNOG" id="COG1092">
    <property type="taxonomic scope" value="Bacteria"/>
</dbReference>
<dbReference type="HOGENOM" id="CLU_014042_2_0_6"/>
<dbReference type="InParanoid" id="P75864"/>
<dbReference type="OMA" id="TYLNWAE"/>
<dbReference type="OrthoDB" id="9809404at2"/>
<dbReference type="PhylomeDB" id="P75864"/>
<dbReference type="BioCyc" id="EcoCyc:G6488-MONOMER"/>
<dbReference type="BioCyc" id="MetaCyc:G6488-MONOMER"/>
<dbReference type="BRENDA" id="2.1.1.173">
    <property type="organism ID" value="2026"/>
</dbReference>
<dbReference type="EvolutionaryTrace" id="P75864"/>
<dbReference type="PRO" id="PR:P75864"/>
<dbReference type="Proteomes" id="UP000000625">
    <property type="component" value="Chromosome"/>
</dbReference>
<dbReference type="GO" id="GO:0005737">
    <property type="term" value="C:cytoplasm"/>
    <property type="evidence" value="ECO:0000305"/>
    <property type="project" value="UniProtKB"/>
</dbReference>
<dbReference type="GO" id="GO:0052915">
    <property type="term" value="F:23S rRNA (guanine(2445)-N(2))-methyltransferase activity"/>
    <property type="evidence" value="ECO:0007669"/>
    <property type="project" value="UniProtKB-UniRule"/>
</dbReference>
<dbReference type="GO" id="GO:0003723">
    <property type="term" value="F:RNA binding"/>
    <property type="evidence" value="ECO:0007669"/>
    <property type="project" value="UniProtKB-KW"/>
</dbReference>
<dbReference type="GO" id="GO:0008990">
    <property type="term" value="F:rRNA (guanine-N2-)-methyltransferase activity"/>
    <property type="evidence" value="ECO:0000314"/>
    <property type="project" value="UniProtKB"/>
</dbReference>
<dbReference type="GO" id="GO:0070043">
    <property type="term" value="F:rRNA (guanine-N7-)-methyltransferase activity"/>
    <property type="evidence" value="ECO:0000314"/>
    <property type="project" value="EcoCyc"/>
</dbReference>
<dbReference type="GO" id="GO:0070475">
    <property type="term" value="P:rRNA base methylation"/>
    <property type="evidence" value="ECO:0000315"/>
    <property type="project" value="EcoCyc"/>
</dbReference>
<dbReference type="GO" id="GO:0031167">
    <property type="term" value="P:rRNA methylation"/>
    <property type="evidence" value="ECO:0000314"/>
    <property type="project" value="UniProtKB"/>
</dbReference>
<dbReference type="CDD" id="cd02440">
    <property type="entry name" value="AdoMet_MTases"/>
    <property type="match status" value="1"/>
</dbReference>
<dbReference type="CDD" id="cd11715">
    <property type="entry name" value="THUMP_AdoMetMT"/>
    <property type="match status" value="1"/>
</dbReference>
<dbReference type="FunFam" id="3.30.750.80:FF:000001">
    <property type="entry name" value="Ribosomal RNA large subunit methyltransferase K/L"/>
    <property type="match status" value="1"/>
</dbReference>
<dbReference type="FunFam" id="3.40.50.150:FF:000039">
    <property type="entry name" value="Ribosomal RNA large subunit methyltransferase K/L"/>
    <property type="match status" value="1"/>
</dbReference>
<dbReference type="Gene3D" id="3.30.2130.30">
    <property type="match status" value="1"/>
</dbReference>
<dbReference type="Gene3D" id="3.30.750.80">
    <property type="entry name" value="RNA methyltransferase domain (HRMD) like"/>
    <property type="match status" value="1"/>
</dbReference>
<dbReference type="Gene3D" id="3.40.50.150">
    <property type="entry name" value="Vaccinia Virus protein VP39"/>
    <property type="match status" value="2"/>
</dbReference>
<dbReference type="HAMAP" id="MF_01858">
    <property type="entry name" value="23SrRNA_methyltr_KL"/>
    <property type="match status" value="1"/>
</dbReference>
<dbReference type="InterPro" id="IPR017244">
    <property type="entry name" value="23SrRNA_methyltr_KL"/>
</dbReference>
<dbReference type="InterPro" id="IPR002052">
    <property type="entry name" value="DNA_methylase_N6_adenine_CS"/>
</dbReference>
<dbReference type="InterPro" id="IPR000241">
    <property type="entry name" value="RlmKL-like_Mtase"/>
</dbReference>
<dbReference type="InterPro" id="IPR053943">
    <property type="entry name" value="RlmKL-like_Mtase_CS"/>
</dbReference>
<dbReference type="InterPro" id="IPR054170">
    <property type="entry name" value="RlmL_1st"/>
</dbReference>
<dbReference type="InterPro" id="IPR019614">
    <property type="entry name" value="SAM-dep_methyl-trfase"/>
</dbReference>
<dbReference type="InterPro" id="IPR029063">
    <property type="entry name" value="SAM-dependent_MTases_sf"/>
</dbReference>
<dbReference type="InterPro" id="IPR004114">
    <property type="entry name" value="THUMP_dom"/>
</dbReference>
<dbReference type="NCBIfam" id="NF008748">
    <property type="entry name" value="PRK11783.1"/>
    <property type="match status" value="1"/>
</dbReference>
<dbReference type="PANTHER" id="PTHR47313">
    <property type="entry name" value="RIBOSOMAL RNA LARGE SUBUNIT METHYLTRANSFERASE K/L"/>
    <property type="match status" value="1"/>
</dbReference>
<dbReference type="PANTHER" id="PTHR47313:SF1">
    <property type="entry name" value="RIBOSOMAL RNA LARGE SUBUNIT METHYLTRANSFERASE K_L"/>
    <property type="match status" value="1"/>
</dbReference>
<dbReference type="Pfam" id="PF10672">
    <property type="entry name" value="Methyltrans_SAM"/>
    <property type="match status" value="1"/>
</dbReference>
<dbReference type="Pfam" id="PF22020">
    <property type="entry name" value="RlmL_1st"/>
    <property type="match status" value="1"/>
</dbReference>
<dbReference type="Pfam" id="PF02926">
    <property type="entry name" value="THUMP"/>
    <property type="match status" value="1"/>
</dbReference>
<dbReference type="Pfam" id="PF01170">
    <property type="entry name" value="UPF0020"/>
    <property type="match status" value="1"/>
</dbReference>
<dbReference type="PIRSF" id="PIRSF037618">
    <property type="entry name" value="RNA_Mtase_bacteria_prd"/>
    <property type="match status" value="1"/>
</dbReference>
<dbReference type="PRINTS" id="PR00507">
    <property type="entry name" value="N12N6MTFRASE"/>
</dbReference>
<dbReference type="SMART" id="SM00981">
    <property type="entry name" value="THUMP"/>
    <property type="match status" value="1"/>
</dbReference>
<dbReference type="SUPFAM" id="SSF53335">
    <property type="entry name" value="S-adenosyl-L-methionine-dependent methyltransferases"/>
    <property type="match status" value="2"/>
</dbReference>
<dbReference type="PROSITE" id="PS51165">
    <property type="entry name" value="THUMP"/>
    <property type="match status" value="1"/>
</dbReference>
<dbReference type="PROSITE" id="PS01261">
    <property type="entry name" value="UPF0020"/>
    <property type="match status" value="1"/>
</dbReference>
<protein>
    <recommendedName>
        <fullName>Ribosomal RNA large subunit methyltransferase K/L</fullName>
    </recommendedName>
    <domain>
        <recommendedName>
            <fullName>23S rRNA m2G2445 methyltransferase</fullName>
            <ecNumber>2.1.1.173</ecNumber>
        </recommendedName>
        <alternativeName>
            <fullName>rRNA (guanine-N(2)-)-methyltransferase RlmL</fullName>
        </alternativeName>
    </domain>
    <domain>
        <recommendedName>
            <fullName>23S rRNA m7G2069 methyltransferase</fullName>
            <ecNumber>2.1.1.264</ecNumber>
        </recommendedName>
        <alternativeName>
            <fullName>rRNA (guanine-N(7)-)-methyltransferase RlmK</fullName>
        </alternativeName>
    </domain>
</protein>
<feature type="chain" id="PRO_0000140473" description="Ribosomal RNA large subunit methyltransferase K/L">
    <location>
        <begin position="1"/>
        <end position="702"/>
    </location>
</feature>
<feature type="domain" description="THUMP">
    <location>
        <begin position="43"/>
        <end position="154"/>
    </location>
</feature>
<feature type="region of interest" description="RlmL">
    <location>
        <begin position="1"/>
        <end position="397"/>
    </location>
</feature>
<feature type="region of interest" description="RlmK">
    <location>
        <begin position="398"/>
        <end position="702"/>
    </location>
</feature>
<feature type="mutagenesis site" description="Does not affect methyltransferase activity." evidence="2">
    <original>D</original>
    <variation>A</variation>
    <location>
        <position position="195"/>
    </location>
</feature>
<feature type="mutagenesis site" description="Impairs m2G2445 formation, but does not affect m7G2069 formation." evidence="2">
    <original>N</original>
    <variation>A</variation>
    <location>
        <position position="309"/>
    </location>
</feature>
<feature type="mutagenesis site" description="Impairs m2G2445 formation, but does not affect m7G2069 formation." evidence="2">
    <original>N</original>
    <variation>A</variation>
    <location>
        <position position="397"/>
    </location>
</feature>
<feature type="mutagenesis site" description="Does not affect methyltransferase activity." evidence="2">
    <original>R</original>
    <variation>A</variation>
    <location>
        <position position="530"/>
    </location>
</feature>
<feature type="mutagenesis site" description="Impairs m7G2069 formation, but does not affect m2G2445 formation." evidence="2">
    <original>D</original>
    <variation>A</variation>
    <location>
        <position position="568"/>
    </location>
</feature>
<feature type="mutagenesis site" description="Does not affect methyltransferase activity." evidence="2">
    <original>D</original>
    <variation>A</variation>
    <location>
        <position position="597"/>
    </location>
</feature>
<feature type="strand" evidence="5">
    <location>
        <begin position="2"/>
        <end position="7"/>
    </location>
</feature>
<feature type="helix" evidence="5">
    <location>
        <begin position="13"/>
        <end position="22"/>
    </location>
</feature>
<feature type="strand" evidence="5">
    <location>
        <begin position="26"/>
        <end position="31"/>
    </location>
</feature>
<feature type="strand" evidence="5">
    <location>
        <begin position="34"/>
        <end position="39"/>
    </location>
</feature>
<feature type="helix" evidence="5">
    <location>
        <begin position="41"/>
        <end position="50"/>
    </location>
</feature>
<feature type="strand" evidence="5">
    <location>
        <begin position="55"/>
        <end position="65"/>
    </location>
</feature>
<feature type="helix" evidence="5">
    <location>
        <begin position="69"/>
        <end position="77"/>
    </location>
</feature>
<feature type="helix" evidence="5">
    <location>
        <begin position="81"/>
        <end position="84"/>
    </location>
</feature>
<feature type="strand" evidence="5">
    <location>
        <begin position="91"/>
        <end position="96"/>
    </location>
</feature>
<feature type="helix" evidence="5">
    <location>
        <begin position="105"/>
        <end position="121"/>
    </location>
</feature>
<feature type="turn" evidence="5">
    <location>
        <begin position="122"/>
        <end position="124"/>
    </location>
</feature>
<feature type="strand" evidence="5">
    <location>
        <begin position="132"/>
        <end position="134"/>
    </location>
</feature>
<feature type="strand" evidence="5">
    <location>
        <begin position="136"/>
        <end position="144"/>
    </location>
</feature>
<feature type="strand" evidence="5">
    <location>
        <begin position="147"/>
        <end position="157"/>
    </location>
</feature>
<feature type="strand" evidence="5">
    <location>
        <begin position="163"/>
        <end position="165"/>
    </location>
</feature>
<feature type="helix" evidence="5">
    <location>
        <begin position="175"/>
        <end position="184"/>
    </location>
</feature>
<feature type="strand" evidence="5">
    <location>
        <begin position="193"/>
        <end position="195"/>
    </location>
</feature>
<feature type="helix" evidence="5">
    <location>
        <begin position="202"/>
        <end position="211"/>
    </location>
</feature>
<feature type="turn" evidence="5">
    <location>
        <begin position="216"/>
        <end position="219"/>
    </location>
</feature>
<feature type="turn" evidence="5">
    <location>
        <begin position="224"/>
        <end position="227"/>
    </location>
</feature>
<feature type="helix" evidence="5">
    <location>
        <begin position="233"/>
        <end position="253"/>
    </location>
</feature>
<feature type="strand" evidence="5">
    <location>
        <begin position="258"/>
        <end position="263"/>
    </location>
</feature>
<feature type="helix" evidence="5">
    <location>
        <begin position="265"/>
        <end position="277"/>
    </location>
</feature>
<feature type="helix" evidence="5">
    <location>
        <begin position="281"/>
        <end position="283"/>
    </location>
</feature>
<feature type="strand" evidence="5">
    <location>
        <begin position="284"/>
        <end position="288"/>
    </location>
</feature>
<feature type="helix" evidence="5">
    <location>
        <begin position="291"/>
        <end position="293"/>
    </location>
</feature>
<feature type="strand" evidence="5">
    <location>
        <begin position="305"/>
        <end position="308"/>
    </location>
</feature>
<feature type="helix" evidence="5">
    <location>
        <begin position="320"/>
        <end position="336"/>
    </location>
</feature>
<feature type="strand" evidence="5">
    <location>
        <begin position="341"/>
        <end position="347"/>
    </location>
</feature>
<feature type="helix" evidence="5">
    <location>
        <begin position="349"/>
        <end position="353"/>
    </location>
</feature>
<feature type="strand" evidence="5">
    <location>
        <begin position="359"/>
        <end position="367"/>
    </location>
</feature>
<feature type="strand" evidence="5">
    <location>
        <begin position="370"/>
        <end position="378"/>
    </location>
</feature>
<feature type="helix" evidence="5">
    <location>
        <begin position="393"/>
        <end position="413"/>
    </location>
</feature>
<feature type="strand" evidence="5">
    <location>
        <begin position="417"/>
        <end position="423"/>
    </location>
</feature>
<feature type="strand" evidence="5">
    <location>
        <begin position="430"/>
        <end position="435"/>
    </location>
</feature>
<feature type="strand" evidence="5">
    <location>
        <begin position="438"/>
        <end position="443"/>
    </location>
</feature>
<feature type="helix" evidence="5">
    <location>
        <begin position="454"/>
        <end position="470"/>
    </location>
</feature>
<feature type="helix" evidence="5">
    <location>
        <begin position="474"/>
        <end position="476"/>
    </location>
</feature>
<feature type="strand" evidence="5">
    <location>
        <begin position="477"/>
        <end position="480"/>
    </location>
</feature>
<feature type="strand" evidence="5">
    <location>
        <begin position="501"/>
        <end position="505"/>
    </location>
</feature>
<feature type="strand" evidence="5">
    <location>
        <begin position="508"/>
        <end position="512"/>
    </location>
</feature>
<feature type="strand" evidence="5">
    <location>
        <begin position="514"/>
        <end position="519"/>
    </location>
</feature>
<feature type="helix" evidence="5">
    <location>
        <begin position="524"/>
        <end position="526"/>
    </location>
</feature>
<feature type="helix" evidence="5">
    <location>
        <begin position="527"/>
        <end position="536"/>
    </location>
</feature>
<feature type="strand" evidence="5">
    <location>
        <begin position="541"/>
        <end position="546"/>
    </location>
</feature>
<feature type="helix" evidence="5">
    <location>
        <begin position="551"/>
        <end position="558"/>
    </location>
</feature>
<feature type="strand" evidence="5">
    <location>
        <begin position="562"/>
        <end position="569"/>
    </location>
</feature>
<feature type="helix" evidence="5">
    <location>
        <begin position="571"/>
        <end position="583"/>
    </location>
</feature>
<feature type="strand" evidence="5">
    <location>
        <begin position="591"/>
        <end position="596"/>
    </location>
</feature>
<feature type="helix" evidence="5">
    <location>
        <begin position="598"/>
        <end position="604"/>
    </location>
</feature>
<feature type="strand" evidence="5">
    <location>
        <begin position="609"/>
        <end position="614"/>
    </location>
</feature>
<feature type="helix" evidence="5">
    <location>
        <begin position="631"/>
        <end position="645"/>
    </location>
</feature>
<feature type="strand" evidence="5">
    <location>
        <begin position="646"/>
        <end position="656"/>
    </location>
</feature>
<feature type="helix" evidence="5">
    <location>
        <begin position="665"/>
        <end position="670"/>
    </location>
</feature>
<feature type="strand" evidence="5">
    <location>
        <begin position="673"/>
        <end position="677"/>
    </location>
</feature>
<feature type="turn" evidence="5">
    <location>
        <begin position="679"/>
        <end position="682"/>
    </location>
</feature>
<feature type="helix" evidence="5">
    <location>
        <begin position="685"/>
        <end position="687"/>
    </location>
</feature>
<feature type="strand" evidence="5">
    <location>
        <begin position="695"/>
        <end position="701"/>
    </location>
</feature>
<sequence length="702" mass="78854">MNSLFASTARGLEELLKTELENLGAVECQVVQGGVHFKGDTRLVYQSLMWSRLASRIMLPLGECKVYSDLDLYLGVQAINWTEMFNPGATFAVHFSGLNDTIRNSQYGAMKVKDAIVDAFTRKNLPRPNVDRDAPDIRVNVWLHKETASIALDLSGDGLHLRGYRDRAGIAPIKETLAAAIVMRSGWQPGTPLLDPMCGSGTLLIEAAMLATDRAPGLHRGRWGFSGWAQHDEAIWQEVKAEAQTRARKGLAEYSSHFYGSDSDARVIQRARTNARLAGIGELITFEVKDVAQLTNPLPKGPYGTVLSNPPYGERLDSEPALIALHSLLGRIMKNQFGGWNLSLFSASPDLLSCLQLRADKQYKAKNGPLDCVQKNYHVAESTPDSKPAMVAEDYTNRLRKNLKKFEKWARQEGIECYRLYDADLPEYNVAVDRYADWVVVQEYAPPKTIDAHKARQRLFDIIAATISVLGIAPNKLVLKTRERQKGKNQYQKLGEKGEFLEVTEYNAHLWVNLTDYLDTGLFLDHRIARRMLGQMSKGKDFLNLFSYTGSATVHAGLGGARSTTTVDMSRTYLEWAERNLRLNGLTGRAHRLIQADCLAWLREANEQFDLIFIDPPTFSNSKRMEDAFDVQRDHLALMKDLKRLLRAGGTIMFSNNKRGFRMDLDGLAKLGLKAQEITQKTLSQDFARNRQIHNCWLITAA</sequence>
<gene>
    <name type="primary">rlmL</name>
    <name type="synonym">rlmK</name>
    <name type="synonym">rlmKL</name>
    <name type="synonym">ycbY</name>
    <name type="ordered locus">b0948</name>
    <name type="ordered locus">JW0931</name>
</gene>
<proteinExistence type="evidence at protein level"/>